<comment type="function">
    <text evidence="1">Essential cell division protein. May link together the upstream cell division proteins, which are predominantly cytoplasmic, with the downstream cell division proteins, which are predominantly periplasmic.</text>
</comment>
<comment type="subunit">
    <text evidence="1">Part of a complex composed of FtsB, FtsL and FtsQ.</text>
</comment>
<comment type="subcellular location">
    <subcellularLocation>
        <location evidence="1">Cell inner membrane</location>
        <topology evidence="1">Single-pass type II membrane protein</topology>
    </subcellularLocation>
    <text evidence="1">Localizes to the division septum.</text>
</comment>
<comment type="similarity">
    <text evidence="1">Belongs to the FtsB family.</text>
</comment>
<dbReference type="EMBL" id="CP000083">
    <property type="protein sequence ID" value="AAZ26561.1"/>
    <property type="molecule type" value="Genomic_DNA"/>
</dbReference>
<dbReference type="RefSeq" id="WP_011041909.1">
    <property type="nucleotide sequence ID" value="NC_003910.7"/>
</dbReference>
<dbReference type="SMR" id="Q487F0"/>
<dbReference type="STRING" id="167879.CPS_1071"/>
<dbReference type="KEGG" id="cps:CPS_1071"/>
<dbReference type="eggNOG" id="COG2919">
    <property type="taxonomic scope" value="Bacteria"/>
</dbReference>
<dbReference type="HOGENOM" id="CLU_134863_5_2_6"/>
<dbReference type="Proteomes" id="UP000000547">
    <property type="component" value="Chromosome"/>
</dbReference>
<dbReference type="GO" id="GO:0032153">
    <property type="term" value="C:cell division site"/>
    <property type="evidence" value="ECO:0007669"/>
    <property type="project" value="UniProtKB-UniRule"/>
</dbReference>
<dbReference type="GO" id="GO:0030428">
    <property type="term" value="C:cell septum"/>
    <property type="evidence" value="ECO:0007669"/>
    <property type="project" value="TreeGrafter"/>
</dbReference>
<dbReference type="GO" id="GO:0005886">
    <property type="term" value="C:plasma membrane"/>
    <property type="evidence" value="ECO:0007669"/>
    <property type="project" value="UniProtKB-SubCell"/>
</dbReference>
<dbReference type="GO" id="GO:0043093">
    <property type="term" value="P:FtsZ-dependent cytokinesis"/>
    <property type="evidence" value="ECO:0007669"/>
    <property type="project" value="UniProtKB-UniRule"/>
</dbReference>
<dbReference type="HAMAP" id="MF_00599">
    <property type="entry name" value="FtsB"/>
    <property type="match status" value="1"/>
</dbReference>
<dbReference type="InterPro" id="IPR023081">
    <property type="entry name" value="Cell_div_FtsB"/>
</dbReference>
<dbReference type="InterPro" id="IPR007060">
    <property type="entry name" value="FtsL/DivIC"/>
</dbReference>
<dbReference type="NCBIfam" id="NF002058">
    <property type="entry name" value="PRK00888.1"/>
    <property type="match status" value="1"/>
</dbReference>
<dbReference type="PANTHER" id="PTHR37485">
    <property type="entry name" value="CELL DIVISION PROTEIN FTSB"/>
    <property type="match status" value="1"/>
</dbReference>
<dbReference type="PANTHER" id="PTHR37485:SF1">
    <property type="entry name" value="CELL DIVISION PROTEIN FTSB"/>
    <property type="match status" value="1"/>
</dbReference>
<dbReference type="Pfam" id="PF04977">
    <property type="entry name" value="DivIC"/>
    <property type="match status" value="1"/>
</dbReference>
<evidence type="ECO:0000255" key="1">
    <source>
        <dbReference type="HAMAP-Rule" id="MF_00599"/>
    </source>
</evidence>
<keyword id="KW-0131">Cell cycle</keyword>
<keyword id="KW-0132">Cell division</keyword>
<keyword id="KW-0997">Cell inner membrane</keyword>
<keyword id="KW-1003">Cell membrane</keyword>
<keyword id="KW-0175">Coiled coil</keyword>
<keyword id="KW-0472">Membrane</keyword>
<keyword id="KW-0812">Transmembrane</keyword>
<keyword id="KW-1133">Transmembrane helix</keyword>
<sequence>MRVFTAILLILLVLLQYRLWFGKNSVPDYLVLKENVVRQQSANEKLQQRNKLLFADTDDLKLGLEAIEERARNELGMIKENETFFRLIPKENSTRNVNN</sequence>
<accession>Q487F0</accession>
<feature type="chain" id="PRO_1000025694" description="Cell division protein FtsB">
    <location>
        <begin position="1"/>
        <end position="99"/>
    </location>
</feature>
<feature type="topological domain" description="Cytoplasmic" evidence="1">
    <location>
        <begin position="1"/>
        <end position="3"/>
    </location>
</feature>
<feature type="transmembrane region" description="Helical" evidence="1">
    <location>
        <begin position="4"/>
        <end position="21"/>
    </location>
</feature>
<feature type="topological domain" description="Periplasmic" evidence="1">
    <location>
        <begin position="22"/>
        <end position="99"/>
    </location>
</feature>
<feature type="coiled-coil region" evidence="1">
    <location>
        <begin position="29"/>
        <end position="53"/>
    </location>
</feature>
<protein>
    <recommendedName>
        <fullName evidence="1">Cell division protein FtsB</fullName>
    </recommendedName>
</protein>
<gene>
    <name evidence="1" type="primary">ftsB</name>
    <name type="ordered locus">CPS_1071</name>
</gene>
<proteinExistence type="inferred from homology"/>
<reference key="1">
    <citation type="journal article" date="2005" name="Proc. Natl. Acad. Sci. U.S.A.">
        <title>The psychrophilic lifestyle as revealed by the genome sequence of Colwellia psychrerythraea 34H through genomic and proteomic analyses.</title>
        <authorList>
            <person name="Methe B.A."/>
            <person name="Nelson K.E."/>
            <person name="Deming J.W."/>
            <person name="Momen B."/>
            <person name="Melamud E."/>
            <person name="Zhang X."/>
            <person name="Moult J."/>
            <person name="Madupu R."/>
            <person name="Nelson W.C."/>
            <person name="Dodson R.J."/>
            <person name="Brinkac L.M."/>
            <person name="Daugherty S.C."/>
            <person name="Durkin A.S."/>
            <person name="DeBoy R.T."/>
            <person name="Kolonay J.F."/>
            <person name="Sullivan S.A."/>
            <person name="Zhou L."/>
            <person name="Davidsen T.M."/>
            <person name="Wu M."/>
            <person name="Huston A.L."/>
            <person name="Lewis M."/>
            <person name="Weaver B."/>
            <person name="Weidman J.F."/>
            <person name="Khouri H."/>
            <person name="Utterback T.R."/>
            <person name="Feldblyum T.V."/>
            <person name="Fraser C.M."/>
        </authorList>
    </citation>
    <scope>NUCLEOTIDE SEQUENCE [LARGE SCALE GENOMIC DNA]</scope>
    <source>
        <strain>34H / ATCC BAA-681</strain>
    </source>
</reference>
<name>FTSB_COLP3</name>
<organism>
    <name type="scientific">Colwellia psychrerythraea (strain 34H / ATCC BAA-681)</name>
    <name type="common">Vibrio psychroerythus</name>
    <dbReference type="NCBI Taxonomy" id="167879"/>
    <lineage>
        <taxon>Bacteria</taxon>
        <taxon>Pseudomonadati</taxon>
        <taxon>Pseudomonadota</taxon>
        <taxon>Gammaproteobacteria</taxon>
        <taxon>Alteromonadales</taxon>
        <taxon>Colwelliaceae</taxon>
        <taxon>Colwellia</taxon>
    </lineage>
</organism>